<protein>
    <recommendedName>
        <fullName evidence="1">dTTP/UTP pyrophosphatase</fullName>
        <shortName evidence="1">dTTPase/UTPase</shortName>
        <ecNumber evidence="1">3.6.1.9</ecNumber>
    </recommendedName>
    <alternativeName>
        <fullName evidence="1">Nucleoside triphosphate pyrophosphatase</fullName>
    </alternativeName>
    <alternativeName>
        <fullName evidence="1">Nucleotide pyrophosphatase</fullName>
        <shortName evidence="1">Nucleotide PPase</shortName>
    </alternativeName>
</protein>
<dbReference type="EC" id="3.6.1.9" evidence="1"/>
<dbReference type="EMBL" id="AE009951">
    <property type="protein sequence ID" value="AAL94955.1"/>
    <property type="molecule type" value="Genomic_DNA"/>
</dbReference>
<dbReference type="RefSeq" id="NP_603656.1">
    <property type="nucleotide sequence ID" value="NC_003454.1"/>
</dbReference>
<dbReference type="RefSeq" id="WP_005903487.1">
    <property type="nucleotide sequence ID" value="NZ_OZ209243.1"/>
</dbReference>
<dbReference type="SMR" id="Q8RFE6"/>
<dbReference type="FunCoup" id="Q8RFE6">
    <property type="interactions" value="310"/>
</dbReference>
<dbReference type="STRING" id="190304.FN0759"/>
<dbReference type="PaxDb" id="190304-FN0759"/>
<dbReference type="EnsemblBacteria" id="AAL94955">
    <property type="protein sequence ID" value="AAL94955"/>
    <property type="gene ID" value="FN0759"/>
</dbReference>
<dbReference type="KEGG" id="fnu:FN0759"/>
<dbReference type="PATRIC" id="fig|190304.8.peg.1322"/>
<dbReference type="eggNOG" id="COG0424">
    <property type="taxonomic scope" value="Bacteria"/>
</dbReference>
<dbReference type="HOGENOM" id="CLU_040416_0_0_0"/>
<dbReference type="InParanoid" id="Q8RFE6"/>
<dbReference type="BioCyc" id="FNUC190304:G1FZS-1345-MONOMER"/>
<dbReference type="Proteomes" id="UP000002521">
    <property type="component" value="Chromosome"/>
</dbReference>
<dbReference type="GO" id="GO:0005737">
    <property type="term" value="C:cytoplasm"/>
    <property type="evidence" value="ECO:0007669"/>
    <property type="project" value="UniProtKB-SubCell"/>
</dbReference>
<dbReference type="GO" id="GO:0036218">
    <property type="term" value="F:dTTP diphosphatase activity"/>
    <property type="evidence" value="ECO:0007669"/>
    <property type="project" value="RHEA"/>
</dbReference>
<dbReference type="GO" id="GO:0047429">
    <property type="term" value="F:nucleoside triphosphate diphosphatase activity"/>
    <property type="evidence" value="ECO:0000318"/>
    <property type="project" value="GO_Central"/>
</dbReference>
<dbReference type="GO" id="GO:0036221">
    <property type="term" value="F:UTP diphosphatase activity"/>
    <property type="evidence" value="ECO:0007669"/>
    <property type="project" value="RHEA"/>
</dbReference>
<dbReference type="GO" id="GO:0009117">
    <property type="term" value="P:nucleotide metabolic process"/>
    <property type="evidence" value="ECO:0007669"/>
    <property type="project" value="UniProtKB-KW"/>
</dbReference>
<dbReference type="CDD" id="cd00555">
    <property type="entry name" value="Maf"/>
    <property type="match status" value="1"/>
</dbReference>
<dbReference type="FunFam" id="3.90.950.10:FF:000005">
    <property type="entry name" value="7-methyl-GTP pyrophosphatase"/>
    <property type="match status" value="1"/>
</dbReference>
<dbReference type="Gene3D" id="3.90.950.10">
    <property type="match status" value="1"/>
</dbReference>
<dbReference type="HAMAP" id="MF_00528">
    <property type="entry name" value="Maf"/>
    <property type="match status" value="1"/>
</dbReference>
<dbReference type="InterPro" id="IPR029001">
    <property type="entry name" value="ITPase-like_fam"/>
</dbReference>
<dbReference type="InterPro" id="IPR003697">
    <property type="entry name" value="Maf-like"/>
</dbReference>
<dbReference type="NCBIfam" id="TIGR00172">
    <property type="entry name" value="maf"/>
    <property type="match status" value="1"/>
</dbReference>
<dbReference type="PANTHER" id="PTHR43213">
    <property type="entry name" value="BIFUNCTIONAL DTTP/UTP PYROPHOSPHATASE/METHYLTRANSFERASE PROTEIN-RELATED"/>
    <property type="match status" value="1"/>
</dbReference>
<dbReference type="PANTHER" id="PTHR43213:SF5">
    <property type="entry name" value="BIFUNCTIONAL DTTP_UTP PYROPHOSPHATASE_METHYLTRANSFERASE PROTEIN-RELATED"/>
    <property type="match status" value="1"/>
</dbReference>
<dbReference type="Pfam" id="PF02545">
    <property type="entry name" value="Maf"/>
    <property type="match status" value="1"/>
</dbReference>
<dbReference type="PIRSF" id="PIRSF006305">
    <property type="entry name" value="Maf"/>
    <property type="match status" value="1"/>
</dbReference>
<dbReference type="SUPFAM" id="SSF52972">
    <property type="entry name" value="ITPase-like"/>
    <property type="match status" value="1"/>
</dbReference>
<keyword id="KW-0963">Cytoplasm</keyword>
<keyword id="KW-0378">Hydrolase</keyword>
<keyword id="KW-0546">Nucleotide metabolism</keyword>
<keyword id="KW-1185">Reference proteome</keyword>
<accession>Q8RFE6</accession>
<comment type="function">
    <text evidence="1">Nucleoside triphosphate pyrophosphatase that hydrolyzes dTTP and UTP. May have a dual role in cell division arrest and in preventing the incorporation of modified nucleotides into cellular nucleic acids.</text>
</comment>
<comment type="catalytic activity">
    <reaction evidence="1">
        <text>dTTP + H2O = dTMP + diphosphate + H(+)</text>
        <dbReference type="Rhea" id="RHEA:28534"/>
        <dbReference type="ChEBI" id="CHEBI:15377"/>
        <dbReference type="ChEBI" id="CHEBI:15378"/>
        <dbReference type="ChEBI" id="CHEBI:33019"/>
        <dbReference type="ChEBI" id="CHEBI:37568"/>
        <dbReference type="ChEBI" id="CHEBI:63528"/>
        <dbReference type="EC" id="3.6.1.9"/>
    </reaction>
</comment>
<comment type="catalytic activity">
    <reaction evidence="1">
        <text>UTP + H2O = UMP + diphosphate + H(+)</text>
        <dbReference type="Rhea" id="RHEA:29395"/>
        <dbReference type="ChEBI" id="CHEBI:15377"/>
        <dbReference type="ChEBI" id="CHEBI:15378"/>
        <dbReference type="ChEBI" id="CHEBI:33019"/>
        <dbReference type="ChEBI" id="CHEBI:46398"/>
        <dbReference type="ChEBI" id="CHEBI:57865"/>
        <dbReference type="EC" id="3.6.1.9"/>
    </reaction>
</comment>
<comment type="cofactor">
    <cofactor evidence="1">
        <name>a divalent metal cation</name>
        <dbReference type="ChEBI" id="CHEBI:60240"/>
    </cofactor>
</comment>
<comment type="subcellular location">
    <subcellularLocation>
        <location evidence="1">Cytoplasm</location>
    </subcellularLocation>
</comment>
<comment type="similarity">
    <text evidence="1">Belongs to the Maf family. YhdE subfamily.</text>
</comment>
<organism>
    <name type="scientific">Fusobacterium nucleatum subsp. nucleatum (strain ATCC 25586 / DSM 15643 / BCRC 10681 / CIP 101130 / JCM 8532 / KCTC 2640 / LMG 13131 / VPI 4355)</name>
    <dbReference type="NCBI Taxonomy" id="190304"/>
    <lineage>
        <taxon>Bacteria</taxon>
        <taxon>Fusobacteriati</taxon>
        <taxon>Fusobacteriota</taxon>
        <taxon>Fusobacteriia</taxon>
        <taxon>Fusobacteriales</taxon>
        <taxon>Fusobacteriaceae</taxon>
        <taxon>Fusobacterium</taxon>
    </lineage>
</organism>
<gene>
    <name type="ordered locus">FN0759</name>
</gene>
<evidence type="ECO:0000255" key="1">
    <source>
        <dbReference type="HAMAP-Rule" id="MF_00528"/>
    </source>
</evidence>
<sequence>MILASNSQRRQEILKDAGFNFKVITSNIEEISDKKNITERILDIAEKKLEQIAKNNINEFVLAADTVVELDGKILGKPKNREEAFRFLKSLSGKVHRVITAYVFKNISKNILIREVVVSEVKFFDLDDDTINWYLDTDEPFDKAGAYGIQGYGRILVEKINGDYYSIMGFPISNFLENLRKIGYKISLIDKI</sequence>
<name>NTPPA_FUSNN</name>
<proteinExistence type="inferred from homology"/>
<reference key="1">
    <citation type="journal article" date="2002" name="J. Bacteriol.">
        <title>Genome sequence and analysis of the oral bacterium Fusobacterium nucleatum strain ATCC 25586.</title>
        <authorList>
            <person name="Kapatral V."/>
            <person name="Anderson I."/>
            <person name="Ivanova N."/>
            <person name="Reznik G."/>
            <person name="Los T."/>
            <person name="Lykidis A."/>
            <person name="Bhattacharyya A."/>
            <person name="Bartman A."/>
            <person name="Gardner W."/>
            <person name="Grechkin G."/>
            <person name="Zhu L."/>
            <person name="Vasieva O."/>
            <person name="Chu L."/>
            <person name="Kogan Y."/>
            <person name="Chaga O."/>
            <person name="Goltsman E."/>
            <person name="Bernal A."/>
            <person name="Larsen N."/>
            <person name="D'Souza M."/>
            <person name="Walunas T."/>
            <person name="Pusch G."/>
            <person name="Haselkorn R."/>
            <person name="Fonstein M."/>
            <person name="Kyrpides N.C."/>
            <person name="Overbeek R."/>
        </authorList>
    </citation>
    <scope>NUCLEOTIDE SEQUENCE [LARGE SCALE GENOMIC DNA]</scope>
    <source>
        <strain>ATCC 25586 / DSM 15643 / BCRC 10681 / CIP 101130 / JCM 8532 / KCTC 2640 / LMG 13131 / VPI 4355</strain>
    </source>
</reference>
<feature type="chain" id="PRO_0000123021" description="dTTP/UTP pyrophosphatase">
    <location>
        <begin position="1"/>
        <end position="192"/>
    </location>
</feature>
<feature type="active site" description="Proton acceptor" evidence="1">
    <location>
        <position position="65"/>
    </location>
</feature>
<feature type="site" description="Important for substrate specificity" evidence="1">
    <location>
        <position position="9"/>
    </location>
</feature>
<feature type="site" description="Important for substrate specificity" evidence="1">
    <location>
        <position position="66"/>
    </location>
</feature>
<feature type="site" description="Important for substrate specificity" evidence="1">
    <location>
        <position position="150"/>
    </location>
</feature>